<feature type="chain" id="PRO_1000145697" description="Cation-efflux pump FieF">
    <location>
        <begin position="1"/>
        <end position="300"/>
    </location>
</feature>
<feature type="transmembrane region" description="Helical" evidence="1">
    <location>
        <begin position="12"/>
        <end position="32"/>
    </location>
</feature>
<feature type="transmembrane region" description="Helical" evidence="1">
    <location>
        <begin position="39"/>
        <end position="59"/>
    </location>
</feature>
<feature type="transmembrane region" description="Helical" evidence="1">
    <location>
        <begin position="82"/>
        <end position="102"/>
    </location>
</feature>
<feature type="transmembrane region" description="Helical" evidence="1">
    <location>
        <begin position="114"/>
        <end position="134"/>
    </location>
</feature>
<feature type="transmembrane region" description="Helical" evidence="1">
    <location>
        <begin position="151"/>
        <end position="171"/>
    </location>
</feature>
<feature type="transmembrane region" description="Helical" evidence="1">
    <location>
        <begin position="172"/>
        <end position="192"/>
    </location>
</feature>
<feature type="binding site" evidence="1">
    <location>
        <position position="45"/>
    </location>
    <ligand>
        <name>Zn(2+)</name>
        <dbReference type="ChEBI" id="CHEBI:29105"/>
    </ligand>
</feature>
<feature type="binding site" evidence="1">
    <location>
        <position position="49"/>
    </location>
    <ligand>
        <name>Zn(2+)</name>
        <dbReference type="ChEBI" id="CHEBI:29105"/>
    </ligand>
</feature>
<feature type="binding site" evidence="1">
    <location>
        <position position="153"/>
    </location>
    <ligand>
        <name>Zn(2+)</name>
        <dbReference type="ChEBI" id="CHEBI:29105"/>
    </ligand>
</feature>
<feature type="binding site" evidence="1">
    <location>
        <position position="157"/>
    </location>
    <ligand>
        <name>Zn(2+)</name>
        <dbReference type="ChEBI" id="CHEBI:29105"/>
    </ligand>
</feature>
<gene>
    <name evidence="1" type="primary">fieF</name>
    <name type="ordered locus">EFER_3858</name>
</gene>
<proteinExistence type="inferred from homology"/>
<dbReference type="EMBL" id="CU928158">
    <property type="protein sequence ID" value="CAQ91293.1"/>
    <property type="molecule type" value="Genomic_DNA"/>
</dbReference>
<dbReference type="RefSeq" id="WP_001076736.1">
    <property type="nucleotide sequence ID" value="NC_011740.1"/>
</dbReference>
<dbReference type="SMR" id="B7LVD0"/>
<dbReference type="GeneID" id="75059452"/>
<dbReference type="KEGG" id="efe:EFER_3858"/>
<dbReference type="HOGENOM" id="CLU_013430_3_0_6"/>
<dbReference type="OrthoDB" id="9806522at2"/>
<dbReference type="Proteomes" id="UP000000745">
    <property type="component" value="Chromosome"/>
</dbReference>
<dbReference type="GO" id="GO:0005886">
    <property type="term" value="C:plasma membrane"/>
    <property type="evidence" value="ECO:0007669"/>
    <property type="project" value="UniProtKB-SubCell"/>
</dbReference>
<dbReference type="GO" id="GO:0015086">
    <property type="term" value="F:cadmium ion transmembrane transporter activity"/>
    <property type="evidence" value="ECO:0007669"/>
    <property type="project" value="UniProtKB-UniRule"/>
</dbReference>
<dbReference type="GO" id="GO:0015093">
    <property type="term" value="F:ferrous iron transmembrane transporter activity"/>
    <property type="evidence" value="ECO:0007669"/>
    <property type="project" value="TreeGrafter"/>
</dbReference>
<dbReference type="GO" id="GO:0046872">
    <property type="term" value="F:metal ion binding"/>
    <property type="evidence" value="ECO:0007669"/>
    <property type="project" value="UniProtKB-KW"/>
</dbReference>
<dbReference type="GO" id="GO:0015341">
    <property type="term" value="F:zinc efflux antiporter activity"/>
    <property type="evidence" value="ECO:0007669"/>
    <property type="project" value="TreeGrafter"/>
</dbReference>
<dbReference type="GO" id="GO:0006882">
    <property type="term" value="P:intracellular zinc ion homeostasis"/>
    <property type="evidence" value="ECO:0007669"/>
    <property type="project" value="TreeGrafter"/>
</dbReference>
<dbReference type="FunFam" id="1.20.1510.10:FF:000001">
    <property type="entry name" value="Ferrous-iron efflux pump FieF"/>
    <property type="match status" value="1"/>
</dbReference>
<dbReference type="FunFam" id="3.30.70.1350:FF:000002">
    <property type="entry name" value="Ferrous-iron efflux pump FieF"/>
    <property type="match status" value="1"/>
</dbReference>
<dbReference type="Gene3D" id="1.20.1510.10">
    <property type="entry name" value="Cation efflux protein transmembrane domain"/>
    <property type="match status" value="1"/>
</dbReference>
<dbReference type="Gene3D" id="3.30.70.1350">
    <property type="entry name" value="Cation efflux protein, cytoplasmic domain"/>
    <property type="match status" value="1"/>
</dbReference>
<dbReference type="HAMAP" id="MF_01425">
    <property type="entry name" value="Cation_efflux_FieF"/>
    <property type="match status" value="1"/>
</dbReference>
<dbReference type="InterPro" id="IPR002524">
    <property type="entry name" value="Cation_efflux"/>
</dbReference>
<dbReference type="InterPro" id="IPR027470">
    <property type="entry name" value="Cation_efflux_CTD"/>
</dbReference>
<dbReference type="InterPro" id="IPR036837">
    <property type="entry name" value="Cation_efflux_CTD_sf"/>
</dbReference>
<dbReference type="InterPro" id="IPR023783">
    <property type="entry name" value="Cation_efflux_FieF"/>
</dbReference>
<dbReference type="InterPro" id="IPR027469">
    <property type="entry name" value="Cation_efflux_TMD_sf"/>
</dbReference>
<dbReference type="InterPro" id="IPR050291">
    <property type="entry name" value="CDF_Transporter"/>
</dbReference>
<dbReference type="NCBIfam" id="TIGR01297">
    <property type="entry name" value="CDF"/>
    <property type="match status" value="1"/>
</dbReference>
<dbReference type="NCBIfam" id="NF007064">
    <property type="entry name" value="PRK09509.1"/>
    <property type="match status" value="1"/>
</dbReference>
<dbReference type="PANTHER" id="PTHR43840:SF41">
    <property type="entry name" value="CATION-EFFLUX PUMP FIEF"/>
    <property type="match status" value="1"/>
</dbReference>
<dbReference type="PANTHER" id="PTHR43840">
    <property type="entry name" value="MITOCHONDRIAL METAL TRANSPORTER 1-RELATED"/>
    <property type="match status" value="1"/>
</dbReference>
<dbReference type="Pfam" id="PF01545">
    <property type="entry name" value="Cation_efflux"/>
    <property type="match status" value="1"/>
</dbReference>
<dbReference type="Pfam" id="PF16916">
    <property type="entry name" value="ZT_dimer"/>
    <property type="match status" value="1"/>
</dbReference>
<dbReference type="SUPFAM" id="SSF160240">
    <property type="entry name" value="Cation efflux protein cytoplasmic domain-like"/>
    <property type="match status" value="1"/>
</dbReference>
<dbReference type="SUPFAM" id="SSF161111">
    <property type="entry name" value="Cation efflux protein transmembrane domain-like"/>
    <property type="match status" value="1"/>
</dbReference>
<name>FIEF_ESCF3</name>
<evidence type="ECO:0000255" key="1">
    <source>
        <dbReference type="HAMAP-Rule" id="MF_01425"/>
    </source>
</evidence>
<organism>
    <name type="scientific">Escherichia fergusonii (strain ATCC 35469 / DSM 13698 / CCUG 18766 / IAM 14443 / JCM 21226 / LMG 7866 / NBRC 102419 / NCTC 12128 / CDC 0568-73)</name>
    <dbReference type="NCBI Taxonomy" id="585054"/>
    <lineage>
        <taxon>Bacteria</taxon>
        <taxon>Pseudomonadati</taxon>
        <taxon>Pseudomonadota</taxon>
        <taxon>Gammaproteobacteria</taxon>
        <taxon>Enterobacterales</taxon>
        <taxon>Enterobacteriaceae</taxon>
        <taxon>Escherichia</taxon>
    </lineage>
</organism>
<keyword id="KW-0997">Cell inner membrane</keyword>
<keyword id="KW-1003">Cell membrane</keyword>
<keyword id="KW-0406">Ion transport</keyword>
<keyword id="KW-0408">Iron</keyword>
<keyword id="KW-0410">Iron transport</keyword>
<keyword id="KW-0472">Membrane</keyword>
<keyword id="KW-0479">Metal-binding</keyword>
<keyword id="KW-0812">Transmembrane</keyword>
<keyword id="KW-1133">Transmembrane helix</keyword>
<keyword id="KW-0813">Transport</keyword>
<keyword id="KW-0862">Zinc</keyword>
<keyword id="KW-0864">Zinc transport</keyword>
<reference key="1">
    <citation type="journal article" date="2009" name="PLoS Genet.">
        <title>Organised genome dynamics in the Escherichia coli species results in highly diverse adaptive paths.</title>
        <authorList>
            <person name="Touchon M."/>
            <person name="Hoede C."/>
            <person name="Tenaillon O."/>
            <person name="Barbe V."/>
            <person name="Baeriswyl S."/>
            <person name="Bidet P."/>
            <person name="Bingen E."/>
            <person name="Bonacorsi S."/>
            <person name="Bouchier C."/>
            <person name="Bouvet O."/>
            <person name="Calteau A."/>
            <person name="Chiapello H."/>
            <person name="Clermont O."/>
            <person name="Cruveiller S."/>
            <person name="Danchin A."/>
            <person name="Diard M."/>
            <person name="Dossat C."/>
            <person name="Karoui M.E."/>
            <person name="Frapy E."/>
            <person name="Garry L."/>
            <person name="Ghigo J.M."/>
            <person name="Gilles A.M."/>
            <person name="Johnson J."/>
            <person name="Le Bouguenec C."/>
            <person name="Lescat M."/>
            <person name="Mangenot S."/>
            <person name="Martinez-Jehanne V."/>
            <person name="Matic I."/>
            <person name="Nassif X."/>
            <person name="Oztas S."/>
            <person name="Petit M.A."/>
            <person name="Pichon C."/>
            <person name="Rouy Z."/>
            <person name="Ruf C.S."/>
            <person name="Schneider D."/>
            <person name="Tourret J."/>
            <person name="Vacherie B."/>
            <person name="Vallenet D."/>
            <person name="Medigue C."/>
            <person name="Rocha E.P.C."/>
            <person name="Denamur E."/>
        </authorList>
    </citation>
    <scope>NUCLEOTIDE SEQUENCE [LARGE SCALE GENOMIC DNA]</scope>
    <source>
        <strain>ATCC 35469 / DSM 13698 / BCRC 15582 / CCUG 18766 / IAM 14443 / JCM 21226 / LMG 7866 / NBRC 102419 / NCTC 12128 / CDC 0568-73</strain>
    </source>
</reference>
<comment type="function">
    <text evidence="1">Divalent metal cation transporter which exports Zn(2+), Cd(2+) and possibly Fe(2+). May be involved in zinc and iron detoxification by efflux.</text>
</comment>
<comment type="catalytic activity">
    <reaction evidence="1">
        <text>Zn(2+)(in) + H(+)(out) = Zn(2+)(out) + H(+)(in)</text>
        <dbReference type="Rhea" id="RHEA:28839"/>
        <dbReference type="ChEBI" id="CHEBI:15378"/>
        <dbReference type="ChEBI" id="CHEBI:29105"/>
    </reaction>
</comment>
<comment type="catalytic activity">
    <reaction evidence="1">
        <text>Cd(2+)(in) + H(+)(out) = Cd(2+)(out) + H(+)(in)</text>
        <dbReference type="Rhea" id="RHEA:28739"/>
        <dbReference type="ChEBI" id="CHEBI:15378"/>
        <dbReference type="ChEBI" id="CHEBI:48775"/>
    </reaction>
</comment>
<comment type="catalytic activity">
    <reaction evidence="1">
        <text>Fe(2+)(in) + H(+)(out) = Fe(2+)(out) + H(+)(in)</text>
        <dbReference type="Rhea" id="RHEA:29439"/>
        <dbReference type="ChEBI" id="CHEBI:15378"/>
        <dbReference type="ChEBI" id="CHEBI:29033"/>
    </reaction>
</comment>
<comment type="subunit">
    <text evidence="1">Homodimer.</text>
</comment>
<comment type="subcellular location">
    <subcellularLocation>
        <location evidence="1">Cell inner membrane</location>
        <topology evidence="1">Multi-pass membrane protein</topology>
    </subcellularLocation>
</comment>
<comment type="similarity">
    <text evidence="1">Belongs to the cation diffusion facilitator (CDF) transporter (TC 2.A.4) family. FieF subfamily.</text>
</comment>
<sequence length="300" mass="32929">MNQSYGRLVSRAAIAATAMASLLLLIKIFAWWYTGSVSILAALVDSLVDIGASLTNLLVVRYSLQPADDNHSFGHGKAESLAALAQSMFISGSALFLFLTGIQHLISPTPMNDPGVGIIVTIVALVCTILLVSFQRWVVRRTQSQAVRADMLHYQSDVMMNGAILLALALSWYGWHSADALFALGIGIYILYSALRMGYEAVQSLLDRALPDDERQEIIDIVTSWPGVSGAHDLRTRQSGPTRFIQIHLEMEDSLPLVQAHMVADQVEQAILRRFPGSDVIIHQDPCSVVPREGKRFELS</sequence>
<protein>
    <recommendedName>
        <fullName evidence="1">Cation-efflux pump FieF</fullName>
    </recommendedName>
</protein>
<accession>B7LVD0</accession>